<organism>
    <name type="scientific">Vibrio parahaemolyticus serotype O3:K6 (strain RIMD 2210633)</name>
    <dbReference type="NCBI Taxonomy" id="223926"/>
    <lineage>
        <taxon>Bacteria</taxon>
        <taxon>Pseudomonadati</taxon>
        <taxon>Pseudomonadota</taxon>
        <taxon>Gammaproteobacteria</taxon>
        <taxon>Vibrionales</taxon>
        <taxon>Vibrionaceae</taxon>
        <taxon>Vibrio</taxon>
    </lineage>
</organism>
<sequence length="474" mass="53713">MSKKLLIKTWGCQMNEYDSSKMADLLNAANGYELTEEPEEADVLLLNTCSIREKAQEKVFHQLGRWKTLKDKKPGVVIGVGGCVATQEGDHIRERAPYVDVIFGPQTLHRLPEMIKQSQTDDAPVMDISFPEIEKFDRLPEPRAEGATAFVSIMEGCSKYCTYCVVPYTRGEEVSRPMDDVLFEIAQLAEQGVREVNLLGQNVNAYRGPMHDGEICSFAELLRLVASIDGIDRIRFTTSHPLEFTDDIIAVYEDTPELVSFLHLPVQSGSDRILTMMKRPHTAIEYKSIIRKLRKARPDIQISSDFIVGFPGETDKDFQDTMKLIKDVDFDMSFSFIFSPRPGTPAADYPCDIPEQVKKERLYELQQTINAQAMRYSRLMLATEQRVLVEGPSKKNLMELRARTENNRVVNFEGSADLIGQFVDVKITDVFANSLRGELVRTEKDMDLRSVISPTQMMAKTRREDELGVATFTP</sequence>
<evidence type="ECO:0000255" key="1">
    <source>
        <dbReference type="HAMAP-Rule" id="MF_01864"/>
    </source>
</evidence>
<evidence type="ECO:0000255" key="2">
    <source>
        <dbReference type="PROSITE-ProRule" id="PRU01266"/>
    </source>
</evidence>
<accession>Q87RP4</accession>
<protein>
    <recommendedName>
        <fullName evidence="1">tRNA-2-methylthio-N(6)-dimethylallyladenosine synthase</fullName>
        <ecNumber evidence="1">2.8.4.3</ecNumber>
    </recommendedName>
    <alternativeName>
        <fullName evidence="1">(Dimethylallyl)adenosine tRNA methylthiotransferase MiaB</fullName>
    </alternativeName>
    <alternativeName>
        <fullName evidence="1">tRNA-i(6)A37 methylthiotransferase</fullName>
    </alternativeName>
</protein>
<name>MIAB_VIBPA</name>
<gene>
    <name evidence="1" type="primary">miaB</name>
    <name type="ordered locus">VP0733</name>
</gene>
<feature type="chain" id="PRO_0000374634" description="tRNA-2-methylthio-N(6)-dimethylallyladenosine synthase">
    <location>
        <begin position="1"/>
        <end position="474"/>
    </location>
</feature>
<feature type="domain" description="MTTase N-terminal" evidence="1">
    <location>
        <begin position="3"/>
        <end position="120"/>
    </location>
</feature>
<feature type="domain" description="Radical SAM core" evidence="2">
    <location>
        <begin position="143"/>
        <end position="375"/>
    </location>
</feature>
<feature type="domain" description="TRAM" evidence="1">
    <location>
        <begin position="378"/>
        <end position="441"/>
    </location>
</feature>
<feature type="binding site" evidence="1">
    <location>
        <position position="12"/>
    </location>
    <ligand>
        <name>[4Fe-4S] cluster</name>
        <dbReference type="ChEBI" id="CHEBI:49883"/>
        <label>1</label>
    </ligand>
</feature>
<feature type="binding site" evidence="1">
    <location>
        <position position="49"/>
    </location>
    <ligand>
        <name>[4Fe-4S] cluster</name>
        <dbReference type="ChEBI" id="CHEBI:49883"/>
        <label>1</label>
    </ligand>
</feature>
<feature type="binding site" evidence="1">
    <location>
        <position position="83"/>
    </location>
    <ligand>
        <name>[4Fe-4S] cluster</name>
        <dbReference type="ChEBI" id="CHEBI:49883"/>
        <label>1</label>
    </ligand>
</feature>
<feature type="binding site" evidence="1">
    <location>
        <position position="157"/>
    </location>
    <ligand>
        <name>[4Fe-4S] cluster</name>
        <dbReference type="ChEBI" id="CHEBI:49883"/>
        <label>2</label>
        <note>4Fe-4S-S-AdoMet</note>
    </ligand>
</feature>
<feature type="binding site" evidence="1">
    <location>
        <position position="161"/>
    </location>
    <ligand>
        <name>[4Fe-4S] cluster</name>
        <dbReference type="ChEBI" id="CHEBI:49883"/>
        <label>2</label>
        <note>4Fe-4S-S-AdoMet</note>
    </ligand>
</feature>
<feature type="binding site" evidence="1">
    <location>
        <position position="164"/>
    </location>
    <ligand>
        <name>[4Fe-4S] cluster</name>
        <dbReference type="ChEBI" id="CHEBI:49883"/>
        <label>2</label>
        <note>4Fe-4S-S-AdoMet</note>
    </ligand>
</feature>
<keyword id="KW-0004">4Fe-4S</keyword>
<keyword id="KW-0963">Cytoplasm</keyword>
<keyword id="KW-0408">Iron</keyword>
<keyword id="KW-0411">Iron-sulfur</keyword>
<keyword id="KW-0479">Metal-binding</keyword>
<keyword id="KW-0949">S-adenosyl-L-methionine</keyword>
<keyword id="KW-0808">Transferase</keyword>
<keyword id="KW-0819">tRNA processing</keyword>
<reference key="1">
    <citation type="journal article" date="2003" name="Lancet">
        <title>Genome sequence of Vibrio parahaemolyticus: a pathogenic mechanism distinct from that of V. cholerae.</title>
        <authorList>
            <person name="Makino K."/>
            <person name="Oshima K."/>
            <person name="Kurokawa K."/>
            <person name="Yokoyama K."/>
            <person name="Uda T."/>
            <person name="Tagomori K."/>
            <person name="Iijima Y."/>
            <person name="Najima M."/>
            <person name="Nakano M."/>
            <person name="Yamashita A."/>
            <person name="Kubota Y."/>
            <person name="Kimura S."/>
            <person name="Yasunaga T."/>
            <person name="Honda T."/>
            <person name="Shinagawa H."/>
            <person name="Hattori M."/>
            <person name="Iida T."/>
        </authorList>
    </citation>
    <scope>NUCLEOTIDE SEQUENCE [LARGE SCALE GENOMIC DNA]</scope>
    <source>
        <strain>RIMD 2210633</strain>
    </source>
</reference>
<proteinExistence type="inferred from homology"/>
<comment type="function">
    <text evidence="1">Catalyzes the methylthiolation of N6-(dimethylallyl)adenosine (i(6)A), leading to the formation of 2-methylthio-N6-(dimethylallyl)adenosine (ms(2)i(6)A) at position 37 in tRNAs that read codons beginning with uridine.</text>
</comment>
<comment type="catalytic activity">
    <reaction evidence="1">
        <text>N(6)-dimethylallyladenosine(37) in tRNA + (sulfur carrier)-SH + AH2 + 2 S-adenosyl-L-methionine = 2-methylsulfanyl-N(6)-dimethylallyladenosine(37) in tRNA + (sulfur carrier)-H + 5'-deoxyadenosine + L-methionine + A + S-adenosyl-L-homocysteine + 2 H(+)</text>
        <dbReference type="Rhea" id="RHEA:37067"/>
        <dbReference type="Rhea" id="RHEA-COMP:10375"/>
        <dbReference type="Rhea" id="RHEA-COMP:10376"/>
        <dbReference type="Rhea" id="RHEA-COMP:14737"/>
        <dbReference type="Rhea" id="RHEA-COMP:14739"/>
        <dbReference type="ChEBI" id="CHEBI:13193"/>
        <dbReference type="ChEBI" id="CHEBI:15378"/>
        <dbReference type="ChEBI" id="CHEBI:17319"/>
        <dbReference type="ChEBI" id="CHEBI:17499"/>
        <dbReference type="ChEBI" id="CHEBI:29917"/>
        <dbReference type="ChEBI" id="CHEBI:57844"/>
        <dbReference type="ChEBI" id="CHEBI:57856"/>
        <dbReference type="ChEBI" id="CHEBI:59789"/>
        <dbReference type="ChEBI" id="CHEBI:64428"/>
        <dbReference type="ChEBI" id="CHEBI:74415"/>
        <dbReference type="ChEBI" id="CHEBI:74417"/>
        <dbReference type="EC" id="2.8.4.3"/>
    </reaction>
</comment>
<comment type="cofactor">
    <cofactor evidence="1">
        <name>[4Fe-4S] cluster</name>
        <dbReference type="ChEBI" id="CHEBI:49883"/>
    </cofactor>
    <text evidence="1">Binds 2 [4Fe-4S] clusters. One cluster is coordinated with 3 cysteines and an exchangeable S-adenosyl-L-methionine.</text>
</comment>
<comment type="subunit">
    <text evidence="1">Monomer.</text>
</comment>
<comment type="subcellular location">
    <subcellularLocation>
        <location evidence="1">Cytoplasm</location>
    </subcellularLocation>
</comment>
<comment type="similarity">
    <text evidence="1">Belongs to the methylthiotransferase family. MiaB subfamily.</text>
</comment>
<dbReference type="EC" id="2.8.4.3" evidence="1"/>
<dbReference type="EMBL" id="BA000031">
    <property type="protein sequence ID" value="BAC58996.1"/>
    <property type="molecule type" value="Genomic_DNA"/>
</dbReference>
<dbReference type="RefSeq" id="NP_797112.1">
    <property type="nucleotide sequence ID" value="NC_004603.1"/>
</dbReference>
<dbReference type="RefSeq" id="WP_005483497.1">
    <property type="nucleotide sequence ID" value="NC_004603.1"/>
</dbReference>
<dbReference type="SMR" id="Q87RP4"/>
<dbReference type="GeneID" id="1188208"/>
<dbReference type="KEGG" id="vpa:VP0733"/>
<dbReference type="PATRIC" id="fig|223926.6.peg.702"/>
<dbReference type="eggNOG" id="COG0621">
    <property type="taxonomic scope" value="Bacteria"/>
</dbReference>
<dbReference type="HOGENOM" id="CLU_018697_2_0_6"/>
<dbReference type="Proteomes" id="UP000002493">
    <property type="component" value="Chromosome 1"/>
</dbReference>
<dbReference type="GO" id="GO:0005829">
    <property type="term" value="C:cytosol"/>
    <property type="evidence" value="ECO:0007669"/>
    <property type="project" value="TreeGrafter"/>
</dbReference>
<dbReference type="GO" id="GO:0051539">
    <property type="term" value="F:4 iron, 4 sulfur cluster binding"/>
    <property type="evidence" value="ECO:0007669"/>
    <property type="project" value="UniProtKB-UniRule"/>
</dbReference>
<dbReference type="GO" id="GO:0046872">
    <property type="term" value="F:metal ion binding"/>
    <property type="evidence" value="ECO:0007669"/>
    <property type="project" value="UniProtKB-KW"/>
</dbReference>
<dbReference type="GO" id="GO:0035597">
    <property type="term" value="F:N6-isopentenyladenosine methylthiotransferase activity"/>
    <property type="evidence" value="ECO:0007669"/>
    <property type="project" value="TreeGrafter"/>
</dbReference>
<dbReference type="CDD" id="cd01335">
    <property type="entry name" value="Radical_SAM"/>
    <property type="match status" value="1"/>
</dbReference>
<dbReference type="FunFam" id="3.40.50.12160:FF:000001">
    <property type="entry name" value="tRNA-2-methylthio-N(6)-dimethylallyladenosine synthase"/>
    <property type="match status" value="1"/>
</dbReference>
<dbReference type="FunFam" id="3.80.30.20:FF:000001">
    <property type="entry name" value="tRNA-2-methylthio-N(6)-dimethylallyladenosine synthase 2"/>
    <property type="match status" value="1"/>
</dbReference>
<dbReference type="Gene3D" id="3.40.50.12160">
    <property type="entry name" value="Methylthiotransferase, N-terminal domain"/>
    <property type="match status" value="1"/>
</dbReference>
<dbReference type="Gene3D" id="3.80.30.20">
    <property type="entry name" value="tm_1862 like domain"/>
    <property type="match status" value="1"/>
</dbReference>
<dbReference type="HAMAP" id="MF_01864">
    <property type="entry name" value="tRNA_metthiotr_MiaB"/>
    <property type="match status" value="1"/>
</dbReference>
<dbReference type="InterPro" id="IPR006638">
    <property type="entry name" value="Elp3/MiaA/NifB-like_rSAM"/>
</dbReference>
<dbReference type="InterPro" id="IPR005839">
    <property type="entry name" value="Methylthiotransferase"/>
</dbReference>
<dbReference type="InterPro" id="IPR020612">
    <property type="entry name" value="Methylthiotransferase_CS"/>
</dbReference>
<dbReference type="InterPro" id="IPR013848">
    <property type="entry name" value="Methylthiotransferase_N"/>
</dbReference>
<dbReference type="InterPro" id="IPR038135">
    <property type="entry name" value="Methylthiotransferase_N_sf"/>
</dbReference>
<dbReference type="InterPro" id="IPR006463">
    <property type="entry name" value="MiaB_methiolase"/>
</dbReference>
<dbReference type="InterPro" id="IPR007197">
    <property type="entry name" value="rSAM"/>
</dbReference>
<dbReference type="InterPro" id="IPR023404">
    <property type="entry name" value="rSAM_horseshoe"/>
</dbReference>
<dbReference type="InterPro" id="IPR002792">
    <property type="entry name" value="TRAM_dom"/>
</dbReference>
<dbReference type="NCBIfam" id="TIGR01574">
    <property type="entry name" value="miaB-methiolase"/>
    <property type="match status" value="1"/>
</dbReference>
<dbReference type="NCBIfam" id="TIGR00089">
    <property type="entry name" value="MiaB/RimO family radical SAM methylthiotransferase"/>
    <property type="match status" value="1"/>
</dbReference>
<dbReference type="PANTHER" id="PTHR43020">
    <property type="entry name" value="CDK5 REGULATORY SUBUNIT-ASSOCIATED PROTEIN 1"/>
    <property type="match status" value="1"/>
</dbReference>
<dbReference type="PANTHER" id="PTHR43020:SF2">
    <property type="entry name" value="MITOCHONDRIAL TRNA METHYLTHIOTRANSFERASE CDK5RAP1"/>
    <property type="match status" value="1"/>
</dbReference>
<dbReference type="Pfam" id="PF04055">
    <property type="entry name" value="Radical_SAM"/>
    <property type="match status" value="1"/>
</dbReference>
<dbReference type="Pfam" id="PF01938">
    <property type="entry name" value="TRAM"/>
    <property type="match status" value="1"/>
</dbReference>
<dbReference type="Pfam" id="PF00919">
    <property type="entry name" value="UPF0004"/>
    <property type="match status" value="1"/>
</dbReference>
<dbReference type="SFLD" id="SFLDF00273">
    <property type="entry name" value="(dimethylallyl)adenosine_tRNA"/>
    <property type="match status" value="1"/>
</dbReference>
<dbReference type="SFLD" id="SFLDG01082">
    <property type="entry name" value="B12-binding_domain_containing"/>
    <property type="match status" value="1"/>
</dbReference>
<dbReference type="SFLD" id="SFLDG01061">
    <property type="entry name" value="methylthiotransferase"/>
    <property type="match status" value="1"/>
</dbReference>
<dbReference type="SMART" id="SM00729">
    <property type="entry name" value="Elp3"/>
    <property type="match status" value="1"/>
</dbReference>
<dbReference type="SUPFAM" id="SSF102114">
    <property type="entry name" value="Radical SAM enzymes"/>
    <property type="match status" value="1"/>
</dbReference>
<dbReference type="PROSITE" id="PS51449">
    <property type="entry name" value="MTTASE_N"/>
    <property type="match status" value="1"/>
</dbReference>
<dbReference type="PROSITE" id="PS01278">
    <property type="entry name" value="MTTASE_RADICAL"/>
    <property type="match status" value="1"/>
</dbReference>
<dbReference type="PROSITE" id="PS51918">
    <property type="entry name" value="RADICAL_SAM"/>
    <property type="match status" value="1"/>
</dbReference>
<dbReference type="PROSITE" id="PS50926">
    <property type="entry name" value="TRAM"/>
    <property type="match status" value="1"/>
</dbReference>